<reference key="1">
    <citation type="submission" date="2008-04" db="EMBL/GenBank/DDBJ databases">
        <title>Complete sequence of chromosome 1 of Burkholderia ambifaria MC40-6.</title>
        <authorList>
            <person name="Copeland A."/>
            <person name="Lucas S."/>
            <person name="Lapidus A."/>
            <person name="Glavina del Rio T."/>
            <person name="Dalin E."/>
            <person name="Tice H."/>
            <person name="Pitluck S."/>
            <person name="Chain P."/>
            <person name="Malfatti S."/>
            <person name="Shin M."/>
            <person name="Vergez L."/>
            <person name="Lang D."/>
            <person name="Schmutz J."/>
            <person name="Larimer F."/>
            <person name="Land M."/>
            <person name="Hauser L."/>
            <person name="Kyrpides N."/>
            <person name="Lykidis A."/>
            <person name="Ramette A."/>
            <person name="Konstantinidis K."/>
            <person name="Tiedje J."/>
            <person name="Richardson P."/>
        </authorList>
    </citation>
    <scope>NUCLEOTIDE SEQUENCE [LARGE SCALE GENOMIC DNA]</scope>
    <source>
        <strain>MC40-6</strain>
    </source>
</reference>
<proteinExistence type="inferred from homology"/>
<feature type="chain" id="PRO_1000143084" description="Small ribosomal subunit protein uS15">
    <location>
        <begin position="1"/>
        <end position="89"/>
    </location>
</feature>
<sequence>MSVADIKKSEVVAQFARGTNDTGSPEVQVALLTARIVELTGHFKTHAKDHHSRRGLLRMVSRRRKLLDYLKGKDADRYRALIEKLGLRK</sequence>
<gene>
    <name evidence="1" type="primary">rpsO</name>
    <name type="ordered locus">BamMC406_2171</name>
</gene>
<organism>
    <name type="scientific">Burkholderia ambifaria (strain MC40-6)</name>
    <dbReference type="NCBI Taxonomy" id="398577"/>
    <lineage>
        <taxon>Bacteria</taxon>
        <taxon>Pseudomonadati</taxon>
        <taxon>Pseudomonadota</taxon>
        <taxon>Betaproteobacteria</taxon>
        <taxon>Burkholderiales</taxon>
        <taxon>Burkholderiaceae</taxon>
        <taxon>Burkholderia</taxon>
        <taxon>Burkholderia cepacia complex</taxon>
    </lineage>
</organism>
<comment type="function">
    <text evidence="1">One of the primary rRNA binding proteins, it binds directly to 16S rRNA where it helps nucleate assembly of the platform of the 30S subunit by binding and bridging several RNA helices of the 16S rRNA.</text>
</comment>
<comment type="function">
    <text evidence="1">Forms an intersubunit bridge (bridge B4) with the 23S rRNA of the 50S subunit in the ribosome.</text>
</comment>
<comment type="subunit">
    <text evidence="1">Part of the 30S ribosomal subunit. Forms a bridge to the 50S subunit in the 70S ribosome, contacting the 23S rRNA.</text>
</comment>
<comment type="similarity">
    <text evidence="1">Belongs to the universal ribosomal protein uS15 family.</text>
</comment>
<dbReference type="EMBL" id="CP001025">
    <property type="protein sequence ID" value="ACB64650.1"/>
    <property type="molecule type" value="Genomic_DNA"/>
</dbReference>
<dbReference type="RefSeq" id="WP_006398792.1">
    <property type="nucleotide sequence ID" value="NC_010551.1"/>
</dbReference>
<dbReference type="SMR" id="B1YTR2"/>
<dbReference type="GeneID" id="98107299"/>
<dbReference type="KEGG" id="bac:BamMC406_2171"/>
<dbReference type="HOGENOM" id="CLU_148518_0_0_4"/>
<dbReference type="OrthoDB" id="9799262at2"/>
<dbReference type="Proteomes" id="UP000001680">
    <property type="component" value="Chromosome 1"/>
</dbReference>
<dbReference type="GO" id="GO:0022627">
    <property type="term" value="C:cytosolic small ribosomal subunit"/>
    <property type="evidence" value="ECO:0007669"/>
    <property type="project" value="TreeGrafter"/>
</dbReference>
<dbReference type="GO" id="GO:0019843">
    <property type="term" value="F:rRNA binding"/>
    <property type="evidence" value="ECO:0007669"/>
    <property type="project" value="UniProtKB-UniRule"/>
</dbReference>
<dbReference type="GO" id="GO:0003735">
    <property type="term" value="F:structural constituent of ribosome"/>
    <property type="evidence" value="ECO:0007669"/>
    <property type="project" value="InterPro"/>
</dbReference>
<dbReference type="GO" id="GO:0006412">
    <property type="term" value="P:translation"/>
    <property type="evidence" value="ECO:0007669"/>
    <property type="project" value="UniProtKB-UniRule"/>
</dbReference>
<dbReference type="CDD" id="cd00353">
    <property type="entry name" value="Ribosomal_S15p_S13e"/>
    <property type="match status" value="1"/>
</dbReference>
<dbReference type="FunFam" id="1.10.287.10:FF:000002">
    <property type="entry name" value="30S ribosomal protein S15"/>
    <property type="match status" value="1"/>
</dbReference>
<dbReference type="Gene3D" id="6.10.250.3130">
    <property type="match status" value="1"/>
</dbReference>
<dbReference type="Gene3D" id="1.10.287.10">
    <property type="entry name" value="S15/NS1, RNA-binding"/>
    <property type="match status" value="1"/>
</dbReference>
<dbReference type="HAMAP" id="MF_01343_B">
    <property type="entry name" value="Ribosomal_uS15_B"/>
    <property type="match status" value="1"/>
</dbReference>
<dbReference type="InterPro" id="IPR000589">
    <property type="entry name" value="Ribosomal_uS15"/>
</dbReference>
<dbReference type="InterPro" id="IPR005290">
    <property type="entry name" value="Ribosomal_uS15_bac-type"/>
</dbReference>
<dbReference type="InterPro" id="IPR009068">
    <property type="entry name" value="uS15_NS1_RNA-bd_sf"/>
</dbReference>
<dbReference type="NCBIfam" id="TIGR00952">
    <property type="entry name" value="S15_bact"/>
    <property type="match status" value="1"/>
</dbReference>
<dbReference type="PANTHER" id="PTHR23321">
    <property type="entry name" value="RIBOSOMAL PROTEIN S15, BACTERIAL AND ORGANELLAR"/>
    <property type="match status" value="1"/>
</dbReference>
<dbReference type="PANTHER" id="PTHR23321:SF26">
    <property type="entry name" value="SMALL RIBOSOMAL SUBUNIT PROTEIN US15M"/>
    <property type="match status" value="1"/>
</dbReference>
<dbReference type="Pfam" id="PF00312">
    <property type="entry name" value="Ribosomal_S15"/>
    <property type="match status" value="1"/>
</dbReference>
<dbReference type="SMART" id="SM01387">
    <property type="entry name" value="Ribosomal_S15"/>
    <property type="match status" value="1"/>
</dbReference>
<dbReference type="SUPFAM" id="SSF47060">
    <property type="entry name" value="S15/NS1 RNA-binding domain"/>
    <property type="match status" value="1"/>
</dbReference>
<dbReference type="PROSITE" id="PS00362">
    <property type="entry name" value="RIBOSOMAL_S15"/>
    <property type="match status" value="1"/>
</dbReference>
<name>RS15_BURA4</name>
<evidence type="ECO:0000255" key="1">
    <source>
        <dbReference type="HAMAP-Rule" id="MF_01343"/>
    </source>
</evidence>
<evidence type="ECO:0000305" key="2"/>
<accession>B1YTR2</accession>
<protein>
    <recommendedName>
        <fullName evidence="1">Small ribosomal subunit protein uS15</fullName>
    </recommendedName>
    <alternativeName>
        <fullName evidence="2">30S ribosomal protein S15</fullName>
    </alternativeName>
</protein>
<keyword id="KW-0687">Ribonucleoprotein</keyword>
<keyword id="KW-0689">Ribosomal protein</keyword>
<keyword id="KW-0694">RNA-binding</keyword>
<keyword id="KW-0699">rRNA-binding</keyword>